<evidence type="ECO:0000255" key="1">
    <source>
        <dbReference type="HAMAP-Rule" id="MF_00715"/>
    </source>
</evidence>
<sequence>MHDSTLETRLAELESRLAFQEITIEDLNKTVTAHEIEMAKMREHMRLMIEKLKATQPSHIASQAEETPPPHY</sequence>
<protein>
    <recommendedName>
        <fullName evidence="1">Protein SlyX</fullName>
    </recommendedName>
</protein>
<accession>A6TEY6</accession>
<dbReference type="EMBL" id="CP000647">
    <property type="protein sequence ID" value="ABR79120.1"/>
    <property type="molecule type" value="Genomic_DNA"/>
</dbReference>
<dbReference type="RefSeq" id="WP_002920136.1">
    <property type="nucleotide sequence ID" value="NC_009648.1"/>
</dbReference>
<dbReference type="SMR" id="A6TEY6"/>
<dbReference type="STRING" id="272620.KPN_03733"/>
<dbReference type="PaxDb" id="272620-KPN_03733"/>
<dbReference type="EnsemblBacteria" id="ABR79120">
    <property type="protein sequence ID" value="ABR79120"/>
    <property type="gene ID" value="KPN_03733"/>
</dbReference>
<dbReference type="KEGG" id="kpn:KPN_03733"/>
<dbReference type="HOGENOM" id="CLU_180796_4_2_6"/>
<dbReference type="Proteomes" id="UP000000265">
    <property type="component" value="Chromosome"/>
</dbReference>
<dbReference type="Gene3D" id="1.20.5.300">
    <property type="match status" value="1"/>
</dbReference>
<dbReference type="HAMAP" id="MF_00715">
    <property type="entry name" value="SlyX"/>
    <property type="match status" value="1"/>
</dbReference>
<dbReference type="InterPro" id="IPR007236">
    <property type="entry name" value="SlyX"/>
</dbReference>
<dbReference type="NCBIfam" id="NF002750">
    <property type="entry name" value="PRK02793.1"/>
    <property type="match status" value="1"/>
</dbReference>
<dbReference type="PANTHER" id="PTHR36508">
    <property type="entry name" value="PROTEIN SLYX"/>
    <property type="match status" value="1"/>
</dbReference>
<dbReference type="PANTHER" id="PTHR36508:SF1">
    <property type="entry name" value="PROTEIN SLYX"/>
    <property type="match status" value="1"/>
</dbReference>
<dbReference type="Pfam" id="PF04102">
    <property type="entry name" value="SlyX"/>
    <property type="match status" value="1"/>
</dbReference>
<gene>
    <name evidence="1" type="primary">slyX</name>
    <name type="ordered locus">KPN78578_36960</name>
    <name type="ORF">KPN_03733</name>
</gene>
<comment type="similarity">
    <text evidence="1">Belongs to the SlyX family.</text>
</comment>
<reference key="1">
    <citation type="submission" date="2006-09" db="EMBL/GenBank/DDBJ databases">
        <authorList>
            <consortium name="The Klebsiella pneumonia Genome Sequencing Project"/>
            <person name="McClelland M."/>
            <person name="Sanderson E.K."/>
            <person name="Spieth J."/>
            <person name="Clifton W.S."/>
            <person name="Latreille P."/>
            <person name="Sabo A."/>
            <person name="Pepin K."/>
            <person name="Bhonagiri V."/>
            <person name="Porwollik S."/>
            <person name="Ali J."/>
            <person name="Wilson R.K."/>
        </authorList>
    </citation>
    <scope>NUCLEOTIDE SEQUENCE [LARGE SCALE GENOMIC DNA]</scope>
    <source>
        <strain>ATCC 700721 / MGH 78578</strain>
    </source>
</reference>
<proteinExistence type="inferred from homology"/>
<name>SLYX_KLEP7</name>
<feature type="chain" id="PRO_1000045718" description="Protein SlyX">
    <location>
        <begin position="1"/>
        <end position="72"/>
    </location>
</feature>
<organism>
    <name type="scientific">Klebsiella pneumoniae subsp. pneumoniae (strain ATCC 700721 / MGH 78578)</name>
    <dbReference type="NCBI Taxonomy" id="272620"/>
    <lineage>
        <taxon>Bacteria</taxon>
        <taxon>Pseudomonadati</taxon>
        <taxon>Pseudomonadota</taxon>
        <taxon>Gammaproteobacteria</taxon>
        <taxon>Enterobacterales</taxon>
        <taxon>Enterobacteriaceae</taxon>
        <taxon>Klebsiella/Raoultella group</taxon>
        <taxon>Klebsiella</taxon>
        <taxon>Klebsiella pneumoniae complex</taxon>
    </lineage>
</organism>